<comment type="function">
    <text evidence="1">Binds directly to 16S ribosomal RNA.</text>
</comment>
<comment type="similarity">
    <text evidence="1">Belongs to the bacterial ribosomal protein bS20 family.</text>
</comment>
<evidence type="ECO:0000255" key="1">
    <source>
        <dbReference type="HAMAP-Rule" id="MF_00500"/>
    </source>
</evidence>
<evidence type="ECO:0000256" key="2">
    <source>
        <dbReference type="SAM" id="MobiDB-lite"/>
    </source>
</evidence>
<evidence type="ECO:0000305" key="3"/>
<gene>
    <name evidence="1" type="primary">rpsT</name>
    <name type="ordered locus">Bcenmc03_2575</name>
</gene>
<sequence>MANSAQARKRARQAAKANSHNSALRSKFRTAIKSVRKAVEAGDQAKAAELFKAAVKTIDTIADKKIVHKNKAARSKSRLAAAVKGLQAAA</sequence>
<keyword id="KW-0687">Ribonucleoprotein</keyword>
<keyword id="KW-0689">Ribosomal protein</keyword>
<keyword id="KW-0694">RNA-binding</keyword>
<keyword id="KW-0699">rRNA-binding</keyword>
<protein>
    <recommendedName>
        <fullName evidence="1">Small ribosomal subunit protein bS20</fullName>
    </recommendedName>
    <alternativeName>
        <fullName evidence="3">30S ribosomal protein S20</fullName>
    </alternativeName>
</protein>
<feature type="chain" id="PRO_1000126410" description="Small ribosomal subunit protein bS20">
    <location>
        <begin position="1"/>
        <end position="90"/>
    </location>
</feature>
<feature type="region of interest" description="Disordered" evidence="2">
    <location>
        <begin position="1"/>
        <end position="25"/>
    </location>
</feature>
<organism>
    <name type="scientific">Burkholderia orbicola (strain MC0-3)</name>
    <dbReference type="NCBI Taxonomy" id="406425"/>
    <lineage>
        <taxon>Bacteria</taxon>
        <taxon>Pseudomonadati</taxon>
        <taxon>Pseudomonadota</taxon>
        <taxon>Betaproteobacteria</taxon>
        <taxon>Burkholderiales</taxon>
        <taxon>Burkholderiaceae</taxon>
        <taxon>Burkholderia</taxon>
        <taxon>Burkholderia cepacia complex</taxon>
        <taxon>Burkholderia orbicola</taxon>
    </lineage>
</organism>
<reference key="1">
    <citation type="submission" date="2008-02" db="EMBL/GenBank/DDBJ databases">
        <title>Complete sequence of chromosome 1 of Burkholderia cenocepacia MC0-3.</title>
        <authorList>
            <person name="Copeland A."/>
            <person name="Lucas S."/>
            <person name="Lapidus A."/>
            <person name="Barry K."/>
            <person name="Bruce D."/>
            <person name="Goodwin L."/>
            <person name="Glavina del Rio T."/>
            <person name="Dalin E."/>
            <person name="Tice H."/>
            <person name="Pitluck S."/>
            <person name="Chain P."/>
            <person name="Malfatti S."/>
            <person name="Shin M."/>
            <person name="Vergez L."/>
            <person name="Schmutz J."/>
            <person name="Larimer F."/>
            <person name="Land M."/>
            <person name="Hauser L."/>
            <person name="Kyrpides N."/>
            <person name="Mikhailova N."/>
            <person name="Tiedje J."/>
            <person name="Richardson P."/>
        </authorList>
    </citation>
    <scope>NUCLEOTIDE SEQUENCE [LARGE SCALE GENOMIC DNA]</scope>
    <source>
        <strain>MC0-3</strain>
    </source>
</reference>
<dbReference type="EMBL" id="CP000958">
    <property type="protein sequence ID" value="ACA91736.1"/>
    <property type="molecule type" value="Genomic_DNA"/>
</dbReference>
<dbReference type="RefSeq" id="WP_006482211.1">
    <property type="nucleotide sequence ID" value="NC_010508.1"/>
</dbReference>
<dbReference type="SMR" id="B1JXG1"/>
<dbReference type="GeneID" id="98106158"/>
<dbReference type="KEGG" id="bcm:Bcenmc03_2575"/>
<dbReference type="HOGENOM" id="CLU_160655_4_0_4"/>
<dbReference type="Proteomes" id="UP000002169">
    <property type="component" value="Chromosome 1"/>
</dbReference>
<dbReference type="GO" id="GO:0005829">
    <property type="term" value="C:cytosol"/>
    <property type="evidence" value="ECO:0007669"/>
    <property type="project" value="TreeGrafter"/>
</dbReference>
<dbReference type="GO" id="GO:0015935">
    <property type="term" value="C:small ribosomal subunit"/>
    <property type="evidence" value="ECO:0007669"/>
    <property type="project" value="TreeGrafter"/>
</dbReference>
<dbReference type="GO" id="GO:0070181">
    <property type="term" value="F:small ribosomal subunit rRNA binding"/>
    <property type="evidence" value="ECO:0007669"/>
    <property type="project" value="TreeGrafter"/>
</dbReference>
<dbReference type="GO" id="GO:0003735">
    <property type="term" value="F:structural constituent of ribosome"/>
    <property type="evidence" value="ECO:0007669"/>
    <property type="project" value="InterPro"/>
</dbReference>
<dbReference type="GO" id="GO:0006412">
    <property type="term" value="P:translation"/>
    <property type="evidence" value="ECO:0007669"/>
    <property type="project" value="UniProtKB-UniRule"/>
</dbReference>
<dbReference type="FunFam" id="1.20.58.110:FF:000001">
    <property type="entry name" value="30S ribosomal protein S20"/>
    <property type="match status" value="1"/>
</dbReference>
<dbReference type="Gene3D" id="1.20.58.110">
    <property type="entry name" value="Ribosomal protein S20"/>
    <property type="match status" value="1"/>
</dbReference>
<dbReference type="HAMAP" id="MF_00500">
    <property type="entry name" value="Ribosomal_bS20"/>
    <property type="match status" value="1"/>
</dbReference>
<dbReference type="InterPro" id="IPR002583">
    <property type="entry name" value="Ribosomal_bS20"/>
</dbReference>
<dbReference type="InterPro" id="IPR036510">
    <property type="entry name" value="Ribosomal_bS20_sf"/>
</dbReference>
<dbReference type="NCBIfam" id="TIGR00029">
    <property type="entry name" value="S20"/>
    <property type="match status" value="1"/>
</dbReference>
<dbReference type="PANTHER" id="PTHR33398">
    <property type="entry name" value="30S RIBOSOMAL PROTEIN S20"/>
    <property type="match status" value="1"/>
</dbReference>
<dbReference type="PANTHER" id="PTHR33398:SF1">
    <property type="entry name" value="SMALL RIBOSOMAL SUBUNIT PROTEIN BS20C"/>
    <property type="match status" value="1"/>
</dbReference>
<dbReference type="Pfam" id="PF01649">
    <property type="entry name" value="Ribosomal_S20p"/>
    <property type="match status" value="1"/>
</dbReference>
<dbReference type="SUPFAM" id="SSF46992">
    <property type="entry name" value="Ribosomal protein S20"/>
    <property type="match status" value="1"/>
</dbReference>
<accession>B1JXG1</accession>
<name>RS20_BURO0</name>
<proteinExistence type="inferred from homology"/>